<sequence length="121" mass="13697">MPRVKRGTKRRAKRKKILERASGYYLTKSKLYRSAKESVERALKFAYTGRKQKKRQYRSIWIVRIGAAAKLNGLSYSRFISGLKKAGVELDRKMLSEIAIHDPQAFAVLAEQAKAAQPAAA</sequence>
<dbReference type="EMBL" id="CP000360">
    <property type="protein sequence ID" value="ABF39720.1"/>
    <property type="molecule type" value="Genomic_DNA"/>
</dbReference>
<dbReference type="RefSeq" id="WP_011521522.1">
    <property type="nucleotide sequence ID" value="NC_008009.1"/>
</dbReference>
<dbReference type="SMR" id="Q1ITT0"/>
<dbReference type="STRING" id="204669.Acid345_0715"/>
<dbReference type="EnsemblBacteria" id="ABF39720">
    <property type="protein sequence ID" value="ABF39720"/>
    <property type="gene ID" value="Acid345_0715"/>
</dbReference>
<dbReference type="KEGG" id="aba:Acid345_0715"/>
<dbReference type="eggNOG" id="COG0292">
    <property type="taxonomic scope" value="Bacteria"/>
</dbReference>
<dbReference type="HOGENOM" id="CLU_123265_0_1_0"/>
<dbReference type="OrthoDB" id="9808966at2"/>
<dbReference type="Proteomes" id="UP000002432">
    <property type="component" value="Chromosome"/>
</dbReference>
<dbReference type="GO" id="GO:1990904">
    <property type="term" value="C:ribonucleoprotein complex"/>
    <property type="evidence" value="ECO:0007669"/>
    <property type="project" value="UniProtKB-KW"/>
</dbReference>
<dbReference type="GO" id="GO:0005840">
    <property type="term" value="C:ribosome"/>
    <property type="evidence" value="ECO:0007669"/>
    <property type="project" value="UniProtKB-KW"/>
</dbReference>
<dbReference type="GO" id="GO:0019843">
    <property type="term" value="F:rRNA binding"/>
    <property type="evidence" value="ECO:0007669"/>
    <property type="project" value="UniProtKB-UniRule"/>
</dbReference>
<dbReference type="GO" id="GO:0003735">
    <property type="term" value="F:structural constituent of ribosome"/>
    <property type="evidence" value="ECO:0007669"/>
    <property type="project" value="InterPro"/>
</dbReference>
<dbReference type="GO" id="GO:0000027">
    <property type="term" value="P:ribosomal large subunit assembly"/>
    <property type="evidence" value="ECO:0007669"/>
    <property type="project" value="UniProtKB-UniRule"/>
</dbReference>
<dbReference type="GO" id="GO:0006412">
    <property type="term" value="P:translation"/>
    <property type="evidence" value="ECO:0007669"/>
    <property type="project" value="InterPro"/>
</dbReference>
<dbReference type="CDD" id="cd07026">
    <property type="entry name" value="Ribosomal_L20"/>
    <property type="match status" value="1"/>
</dbReference>
<dbReference type="FunFam" id="1.10.1900.20:FF:000001">
    <property type="entry name" value="50S ribosomal protein L20"/>
    <property type="match status" value="1"/>
</dbReference>
<dbReference type="Gene3D" id="6.10.160.10">
    <property type="match status" value="1"/>
</dbReference>
<dbReference type="Gene3D" id="1.10.1900.20">
    <property type="entry name" value="Ribosomal protein L20"/>
    <property type="match status" value="1"/>
</dbReference>
<dbReference type="HAMAP" id="MF_00382">
    <property type="entry name" value="Ribosomal_bL20"/>
    <property type="match status" value="1"/>
</dbReference>
<dbReference type="InterPro" id="IPR005813">
    <property type="entry name" value="Ribosomal_bL20"/>
</dbReference>
<dbReference type="InterPro" id="IPR035566">
    <property type="entry name" value="Ribosomal_protein_bL20_C"/>
</dbReference>
<dbReference type="NCBIfam" id="TIGR01032">
    <property type="entry name" value="rplT_bact"/>
    <property type="match status" value="1"/>
</dbReference>
<dbReference type="PANTHER" id="PTHR10986">
    <property type="entry name" value="39S RIBOSOMAL PROTEIN L20"/>
    <property type="match status" value="1"/>
</dbReference>
<dbReference type="Pfam" id="PF00453">
    <property type="entry name" value="Ribosomal_L20"/>
    <property type="match status" value="1"/>
</dbReference>
<dbReference type="PRINTS" id="PR00062">
    <property type="entry name" value="RIBOSOMALL20"/>
</dbReference>
<dbReference type="SUPFAM" id="SSF74731">
    <property type="entry name" value="Ribosomal protein L20"/>
    <property type="match status" value="1"/>
</dbReference>
<evidence type="ECO:0000255" key="1">
    <source>
        <dbReference type="HAMAP-Rule" id="MF_00382"/>
    </source>
</evidence>
<evidence type="ECO:0000305" key="2"/>
<gene>
    <name evidence="1" type="primary">rplT</name>
    <name type="ordered locus">Acid345_0715</name>
</gene>
<keyword id="KW-1185">Reference proteome</keyword>
<keyword id="KW-0687">Ribonucleoprotein</keyword>
<keyword id="KW-0689">Ribosomal protein</keyword>
<keyword id="KW-0694">RNA-binding</keyword>
<keyword id="KW-0699">rRNA-binding</keyword>
<proteinExistence type="inferred from homology"/>
<feature type="chain" id="PRO_1000048914" description="Large ribosomal subunit protein bL20">
    <location>
        <begin position="1"/>
        <end position="121"/>
    </location>
</feature>
<comment type="function">
    <text evidence="1">Binds directly to 23S ribosomal RNA and is necessary for the in vitro assembly process of the 50S ribosomal subunit. It is not involved in the protein synthesizing functions of that subunit.</text>
</comment>
<comment type="similarity">
    <text evidence="1">Belongs to the bacterial ribosomal protein bL20 family.</text>
</comment>
<accession>Q1ITT0</accession>
<protein>
    <recommendedName>
        <fullName evidence="1">Large ribosomal subunit protein bL20</fullName>
    </recommendedName>
    <alternativeName>
        <fullName evidence="2">50S ribosomal protein L20</fullName>
    </alternativeName>
</protein>
<name>RL20_KORVE</name>
<reference key="1">
    <citation type="journal article" date="2009" name="Appl. Environ. Microbiol.">
        <title>Three genomes from the phylum Acidobacteria provide insight into the lifestyles of these microorganisms in soils.</title>
        <authorList>
            <person name="Ward N.L."/>
            <person name="Challacombe J.F."/>
            <person name="Janssen P.H."/>
            <person name="Henrissat B."/>
            <person name="Coutinho P.M."/>
            <person name="Wu M."/>
            <person name="Xie G."/>
            <person name="Haft D.H."/>
            <person name="Sait M."/>
            <person name="Badger J."/>
            <person name="Barabote R.D."/>
            <person name="Bradley B."/>
            <person name="Brettin T.S."/>
            <person name="Brinkac L.M."/>
            <person name="Bruce D."/>
            <person name="Creasy T."/>
            <person name="Daugherty S.C."/>
            <person name="Davidsen T.M."/>
            <person name="DeBoy R.T."/>
            <person name="Detter J.C."/>
            <person name="Dodson R.J."/>
            <person name="Durkin A.S."/>
            <person name="Ganapathy A."/>
            <person name="Gwinn-Giglio M."/>
            <person name="Han C.S."/>
            <person name="Khouri H."/>
            <person name="Kiss H."/>
            <person name="Kothari S.P."/>
            <person name="Madupu R."/>
            <person name="Nelson K.E."/>
            <person name="Nelson W.C."/>
            <person name="Paulsen I."/>
            <person name="Penn K."/>
            <person name="Ren Q."/>
            <person name="Rosovitz M.J."/>
            <person name="Selengut J.D."/>
            <person name="Shrivastava S."/>
            <person name="Sullivan S.A."/>
            <person name="Tapia R."/>
            <person name="Thompson L.S."/>
            <person name="Watkins K.L."/>
            <person name="Yang Q."/>
            <person name="Yu C."/>
            <person name="Zafar N."/>
            <person name="Zhou L."/>
            <person name="Kuske C.R."/>
        </authorList>
    </citation>
    <scope>NUCLEOTIDE SEQUENCE [LARGE SCALE GENOMIC DNA]</scope>
    <source>
        <strain>Ellin345</strain>
    </source>
</reference>
<organism>
    <name type="scientific">Koribacter versatilis (strain Ellin345)</name>
    <dbReference type="NCBI Taxonomy" id="204669"/>
    <lineage>
        <taxon>Bacteria</taxon>
        <taxon>Pseudomonadati</taxon>
        <taxon>Acidobacteriota</taxon>
        <taxon>Terriglobia</taxon>
        <taxon>Terriglobales</taxon>
        <taxon>Candidatus Korobacteraceae</taxon>
        <taxon>Candidatus Korobacter</taxon>
    </lineage>
</organism>